<sequence>MSERLSGHTLLISLIATPIRHSLSPKMHNEAFAKLGLDYAYLAFEVGNEELADAVQGIRALGIRGSNVSMPNKQAIIPYLDEISPAAELVGAVNTVVNKDGKGHLVGHVTDGTGAVRALAEEGVDIKDQIITLSGAGGAGTAIAVQLGLDGAKEVRIFNQKDAAFANAEKTVEKINSRTQTKASLTDLADQEAFKKSIAESSIYIDATGVGMKPLEDMSLITDPEVIRPDLVVFDVVYSPAETKLLKFAKEHGAKKAINGLGMMLYQGAEAFKLFTGEDMPVDYIKDLLFNDQDK</sequence>
<reference key="1">
    <citation type="journal article" date="2009" name="BMC Genomics">
        <title>Evidence for niche adaptation in the genome of the bovine pathogen Streptococcus uberis.</title>
        <authorList>
            <person name="Ward P.N."/>
            <person name="Holden M.T.G."/>
            <person name="Leigh J.A."/>
            <person name="Lennard N."/>
            <person name="Bignell A."/>
            <person name="Barron A."/>
            <person name="Clark L."/>
            <person name="Quail M.A."/>
            <person name="Woodward J."/>
            <person name="Barrell B.G."/>
            <person name="Egan S.A."/>
            <person name="Field T.R."/>
            <person name="Maskell D."/>
            <person name="Kehoe M."/>
            <person name="Dowson C.G."/>
            <person name="Chanter N."/>
            <person name="Whatmore A.M."/>
            <person name="Bentley S.D."/>
            <person name="Parkhill J."/>
        </authorList>
    </citation>
    <scope>NUCLEOTIDE SEQUENCE [LARGE SCALE GENOMIC DNA]</scope>
    <source>
        <strain>ATCC BAA-854 / 0140J</strain>
    </source>
</reference>
<organism>
    <name type="scientific">Streptococcus uberis (strain ATCC BAA-854 / 0140J)</name>
    <dbReference type="NCBI Taxonomy" id="218495"/>
    <lineage>
        <taxon>Bacteria</taxon>
        <taxon>Bacillati</taxon>
        <taxon>Bacillota</taxon>
        <taxon>Bacilli</taxon>
        <taxon>Lactobacillales</taxon>
        <taxon>Streptococcaceae</taxon>
        <taxon>Streptococcus</taxon>
    </lineage>
</organism>
<accession>B9DV19</accession>
<keyword id="KW-0028">Amino-acid biosynthesis</keyword>
<keyword id="KW-0057">Aromatic amino acid biosynthesis</keyword>
<keyword id="KW-0521">NADP</keyword>
<keyword id="KW-0560">Oxidoreductase</keyword>
<keyword id="KW-1185">Reference proteome</keyword>
<comment type="function">
    <text evidence="1">Involved in the biosynthesis of the chorismate, which leads to the biosynthesis of aromatic amino acids. Catalyzes the reversible NADPH linked reduction of 3-dehydroshikimate (DHSA) to yield shikimate (SA).</text>
</comment>
<comment type="catalytic activity">
    <reaction evidence="1">
        <text>shikimate + NADP(+) = 3-dehydroshikimate + NADPH + H(+)</text>
        <dbReference type="Rhea" id="RHEA:17737"/>
        <dbReference type="ChEBI" id="CHEBI:15378"/>
        <dbReference type="ChEBI" id="CHEBI:16630"/>
        <dbReference type="ChEBI" id="CHEBI:36208"/>
        <dbReference type="ChEBI" id="CHEBI:57783"/>
        <dbReference type="ChEBI" id="CHEBI:58349"/>
        <dbReference type="EC" id="1.1.1.25"/>
    </reaction>
</comment>
<comment type="pathway">
    <text evidence="1">Metabolic intermediate biosynthesis; chorismate biosynthesis; chorismate from D-erythrose 4-phosphate and phosphoenolpyruvate: step 4/7.</text>
</comment>
<comment type="subunit">
    <text evidence="1">Homodimer.</text>
</comment>
<comment type="similarity">
    <text evidence="1">Belongs to the shikimate dehydrogenase family.</text>
</comment>
<dbReference type="EC" id="1.1.1.25" evidence="1"/>
<dbReference type="EMBL" id="AM946015">
    <property type="protein sequence ID" value="CAR42947.1"/>
    <property type="molecule type" value="Genomic_DNA"/>
</dbReference>
<dbReference type="RefSeq" id="WP_015911682.1">
    <property type="nucleotide sequence ID" value="NC_012004.1"/>
</dbReference>
<dbReference type="SMR" id="B9DV19"/>
<dbReference type="STRING" id="218495.SUB1362"/>
<dbReference type="KEGG" id="sub:SUB1362"/>
<dbReference type="eggNOG" id="COG0169">
    <property type="taxonomic scope" value="Bacteria"/>
</dbReference>
<dbReference type="HOGENOM" id="CLU_044063_4_4_9"/>
<dbReference type="OrthoDB" id="9792692at2"/>
<dbReference type="UniPathway" id="UPA00053">
    <property type="reaction ID" value="UER00087"/>
</dbReference>
<dbReference type="Proteomes" id="UP000000449">
    <property type="component" value="Chromosome"/>
</dbReference>
<dbReference type="GO" id="GO:0050661">
    <property type="term" value="F:NADP binding"/>
    <property type="evidence" value="ECO:0007669"/>
    <property type="project" value="InterPro"/>
</dbReference>
<dbReference type="GO" id="GO:0004764">
    <property type="term" value="F:shikimate 3-dehydrogenase (NADP+) activity"/>
    <property type="evidence" value="ECO:0007669"/>
    <property type="project" value="UniProtKB-UniRule"/>
</dbReference>
<dbReference type="GO" id="GO:0008652">
    <property type="term" value="P:amino acid biosynthetic process"/>
    <property type="evidence" value="ECO:0007669"/>
    <property type="project" value="UniProtKB-KW"/>
</dbReference>
<dbReference type="GO" id="GO:0009073">
    <property type="term" value="P:aromatic amino acid family biosynthetic process"/>
    <property type="evidence" value="ECO:0007669"/>
    <property type="project" value="UniProtKB-KW"/>
</dbReference>
<dbReference type="GO" id="GO:0009423">
    <property type="term" value="P:chorismate biosynthetic process"/>
    <property type="evidence" value="ECO:0007669"/>
    <property type="project" value="UniProtKB-UniRule"/>
</dbReference>
<dbReference type="GO" id="GO:0019632">
    <property type="term" value="P:shikimate metabolic process"/>
    <property type="evidence" value="ECO:0007669"/>
    <property type="project" value="InterPro"/>
</dbReference>
<dbReference type="CDD" id="cd01065">
    <property type="entry name" value="NAD_bind_Shikimate_DH"/>
    <property type="match status" value="1"/>
</dbReference>
<dbReference type="FunFam" id="3.40.50.10860:FF:000004">
    <property type="entry name" value="Quinate/shikimate dehydrogenase"/>
    <property type="match status" value="1"/>
</dbReference>
<dbReference type="FunFam" id="3.40.50.720:FF:000086">
    <property type="entry name" value="Quinate/shikimate dehydrogenase"/>
    <property type="match status" value="1"/>
</dbReference>
<dbReference type="Gene3D" id="3.40.50.10860">
    <property type="entry name" value="Leucine Dehydrogenase, chain A, domain 1"/>
    <property type="match status" value="1"/>
</dbReference>
<dbReference type="Gene3D" id="3.40.50.720">
    <property type="entry name" value="NAD(P)-binding Rossmann-like Domain"/>
    <property type="match status" value="1"/>
</dbReference>
<dbReference type="HAMAP" id="MF_00222">
    <property type="entry name" value="Shikimate_DH_AroE"/>
    <property type="match status" value="1"/>
</dbReference>
<dbReference type="InterPro" id="IPR046346">
    <property type="entry name" value="Aminoacid_DH-like_N_sf"/>
</dbReference>
<dbReference type="InterPro" id="IPR036291">
    <property type="entry name" value="NAD(P)-bd_dom_sf"/>
</dbReference>
<dbReference type="InterPro" id="IPR041121">
    <property type="entry name" value="SDH_C"/>
</dbReference>
<dbReference type="InterPro" id="IPR011342">
    <property type="entry name" value="Shikimate_DH"/>
</dbReference>
<dbReference type="InterPro" id="IPR013708">
    <property type="entry name" value="Shikimate_DH-bd_N"/>
</dbReference>
<dbReference type="InterPro" id="IPR022893">
    <property type="entry name" value="Shikimate_DH_fam"/>
</dbReference>
<dbReference type="NCBIfam" id="TIGR00507">
    <property type="entry name" value="aroE"/>
    <property type="match status" value="1"/>
</dbReference>
<dbReference type="NCBIfam" id="NF001313">
    <property type="entry name" value="PRK00258.2-1"/>
    <property type="match status" value="1"/>
</dbReference>
<dbReference type="NCBIfam" id="NF001319">
    <property type="entry name" value="PRK00258.3-3"/>
    <property type="match status" value="1"/>
</dbReference>
<dbReference type="PANTHER" id="PTHR21089:SF1">
    <property type="entry name" value="BIFUNCTIONAL 3-DEHYDROQUINATE DEHYDRATASE_SHIKIMATE DEHYDROGENASE, CHLOROPLASTIC"/>
    <property type="match status" value="1"/>
</dbReference>
<dbReference type="PANTHER" id="PTHR21089">
    <property type="entry name" value="SHIKIMATE DEHYDROGENASE"/>
    <property type="match status" value="1"/>
</dbReference>
<dbReference type="Pfam" id="PF18317">
    <property type="entry name" value="SDH_C"/>
    <property type="match status" value="1"/>
</dbReference>
<dbReference type="Pfam" id="PF08501">
    <property type="entry name" value="Shikimate_dh_N"/>
    <property type="match status" value="1"/>
</dbReference>
<dbReference type="SUPFAM" id="SSF53223">
    <property type="entry name" value="Aminoacid dehydrogenase-like, N-terminal domain"/>
    <property type="match status" value="1"/>
</dbReference>
<dbReference type="SUPFAM" id="SSF51735">
    <property type="entry name" value="NAD(P)-binding Rossmann-fold domains"/>
    <property type="match status" value="1"/>
</dbReference>
<gene>
    <name evidence="1" type="primary">aroE</name>
    <name type="ordered locus">SUB1362</name>
</gene>
<proteinExistence type="inferred from homology"/>
<protein>
    <recommendedName>
        <fullName evidence="1">Shikimate dehydrogenase (NADP(+))</fullName>
        <shortName evidence="1">SDH</shortName>
        <ecNumber evidence="1">1.1.1.25</ecNumber>
    </recommendedName>
</protein>
<evidence type="ECO:0000255" key="1">
    <source>
        <dbReference type="HAMAP-Rule" id="MF_00222"/>
    </source>
</evidence>
<feature type="chain" id="PRO_1000124897" description="Shikimate dehydrogenase (NADP(+))">
    <location>
        <begin position="1"/>
        <end position="295"/>
    </location>
</feature>
<feature type="active site" description="Proton acceptor" evidence="1">
    <location>
        <position position="73"/>
    </location>
</feature>
<feature type="binding site" evidence="1">
    <location>
        <begin position="22"/>
        <end position="24"/>
    </location>
    <ligand>
        <name>shikimate</name>
        <dbReference type="ChEBI" id="CHEBI:36208"/>
    </ligand>
</feature>
<feature type="binding site" evidence="1">
    <location>
        <position position="69"/>
    </location>
    <ligand>
        <name>shikimate</name>
        <dbReference type="ChEBI" id="CHEBI:36208"/>
    </ligand>
</feature>
<feature type="binding site" evidence="1">
    <location>
        <position position="94"/>
    </location>
    <ligand>
        <name>shikimate</name>
        <dbReference type="ChEBI" id="CHEBI:36208"/>
    </ligand>
</feature>
<feature type="binding site" evidence="1">
    <location>
        <position position="111"/>
    </location>
    <ligand>
        <name>shikimate</name>
        <dbReference type="ChEBI" id="CHEBI:36208"/>
    </ligand>
</feature>
<feature type="binding site" evidence="1">
    <location>
        <begin position="135"/>
        <end position="139"/>
    </location>
    <ligand>
        <name>NADP(+)</name>
        <dbReference type="ChEBI" id="CHEBI:58349"/>
    </ligand>
</feature>
<feature type="binding site" evidence="1">
    <location>
        <position position="236"/>
    </location>
    <ligand>
        <name>NADP(+)</name>
        <dbReference type="ChEBI" id="CHEBI:58349"/>
    </ligand>
</feature>
<feature type="binding site" evidence="1">
    <location>
        <position position="238"/>
    </location>
    <ligand>
        <name>shikimate</name>
        <dbReference type="ChEBI" id="CHEBI:36208"/>
    </ligand>
</feature>
<feature type="binding site" evidence="1">
    <location>
        <position position="260"/>
    </location>
    <ligand>
        <name>NADP(+)</name>
        <dbReference type="ChEBI" id="CHEBI:58349"/>
    </ligand>
</feature>
<name>AROE_STRU0</name>